<protein>
    <recommendedName>
        <fullName>Type 1 phosphatases regulator YPI1</fullName>
    </recommendedName>
</protein>
<evidence type="ECO:0000250" key="1"/>
<evidence type="ECO:0000256" key="2">
    <source>
        <dbReference type="SAM" id="MobiDB-lite"/>
    </source>
</evidence>
<evidence type="ECO:0000305" key="3"/>
<gene>
    <name type="primary">YPI1</name>
    <name type="ORF">SNOG_05312</name>
</gene>
<organism>
    <name type="scientific">Phaeosphaeria nodorum (strain SN15 / ATCC MYA-4574 / FGSC 10173)</name>
    <name type="common">Glume blotch fungus</name>
    <name type="synonym">Parastagonospora nodorum</name>
    <dbReference type="NCBI Taxonomy" id="321614"/>
    <lineage>
        <taxon>Eukaryota</taxon>
        <taxon>Fungi</taxon>
        <taxon>Dikarya</taxon>
        <taxon>Ascomycota</taxon>
        <taxon>Pezizomycotina</taxon>
        <taxon>Dothideomycetes</taxon>
        <taxon>Pleosporomycetidae</taxon>
        <taxon>Pleosporales</taxon>
        <taxon>Pleosporineae</taxon>
        <taxon>Phaeosphaeriaceae</taxon>
        <taxon>Parastagonospora</taxon>
    </lineage>
</organism>
<name>YPI1_PHANO</name>
<keyword id="KW-0539">Nucleus</keyword>
<feature type="chain" id="PRO_0000333481" description="Type 1 phosphatases regulator YPI1">
    <location>
        <begin position="1"/>
        <end position="168"/>
    </location>
</feature>
<feature type="region of interest" description="Disordered" evidence="2">
    <location>
        <begin position="1"/>
        <end position="168"/>
    </location>
</feature>
<feature type="compositionally biased region" description="Polar residues" evidence="2">
    <location>
        <begin position="1"/>
        <end position="25"/>
    </location>
</feature>
<feature type="compositionally biased region" description="Basic and acidic residues" evidence="2">
    <location>
        <begin position="47"/>
        <end position="59"/>
    </location>
</feature>
<feature type="compositionally biased region" description="Basic and acidic residues" evidence="2">
    <location>
        <begin position="129"/>
        <end position="142"/>
    </location>
</feature>
<feature type="compositionally biased region" description="Basic residues" evidence="2">
    <location>
        <begin position="146"/>
        <end position="155"/>
    </location>
</feature>
<comment type="function">
    <text evidence="1">Regulator of type 1 phosphatases which maintains protein phosphatase activity under strict control.</text>
</comment>
<comment type="subcellular location">
    <subcellularLocation>
        <location evidence="1">Nucleus</location>
    </subcellularLocation>
</comment>
<comment type="similarity">
    <text evidence="3">Belongs to the YPI1 family.</text>
</comment>
<sequence length="168" mass="18259">MSNSTPMSSQGATTRTVTPTSQGGSRTMEVRPQPVLRLSAPSGVLRLRAEPTERRRIQWAEDVVDNEGMGKKSSKVCCIYHKPRAADESSDDESSGSSSDSDSDSEVDNSTARPSSGAGGHRGRAHKHDHGDCEHGHNHGEGSGKPQKRRQRRKPSPNAYEKMPKVKK</sequence>
<proteinExistence type="inferred from homology"/>
<reference key="1">
    <citation type="journal article" date="2007" name="Plant Cell">
        <title>Dothideomycete-plant interactions illuminated by genome sequencing and EST analysis of the wheat pathogen Stagonospora nodorum.</title>
        <authorList>
            <person name="Hane J.K."/>
            <person name="Lowe R.G.T."/>
            <person name="Solomon P.S."/>
            <person name="Tan K.-C."/>
            <person name="Schoch C.L."/>
            <person name="Spatafora J.W."/>
            <person name="Crous P.W."/>
            <person name="Kodira C.D."/>
            <person name="Birren B.W."/>
            <person name="Galagan J.E."/>
            <person name="Torriani S.F.F."/>
            <person name="McDonald B.A."/>
            <person name="Oliver R.P."/>
        </authorList>
    </citation>
    <scope>NUCLEOTIDE SEQUENCE [LARGE SCALE GENOMIC DNA]</scope>
    <source>
        <strain>SN15 / ATCC MYA-4574 / FGSC 10173</strain>
    </source>
</reference>
<accession>Q0USF2</accession>
<dbReference type="EMBL" id="CH445331">
    <property type="protein sequence ID" value="EAT87703.1"/>
    <property type="molecule type" value="Genomic_DNA"/>
</dbReference>
<dbReference type="RefSeq" id="XP_001795719.1">
    <property type="nucleotide sequence ID" value="XM_001795667.1"/>
</dbReference>
<dbReference type="SMR" id="Q0USF2"/>
<dbReference type="STRING" id="321614.Q0USF2"/>
<dbReference type="EnsemblFungi" id="SNOT_05312">
    <property type="protein sequence ID" value="SNOT_05312"/>
    <property type="gene ID" value="SNOG_05312"/>
</dbReference>
<dbReference type="GeneID" id="5972594"/>
<dbReference type="KEGG" id="pno:SNOG_05312"/>
<dbReference type="VEuPathDB" id="FungiDB:JI435_053120"/>
<dbReference type="eggNOG" id="KOG4102">
    <property type="taxonomic scope" value="Eukaryota"/>
</dbReference>
<dbReference type="HOGENOM" id="CLU_098333_0_2_1"/>
<dbReference type="InParanoid" id="Q0USF2"/>
<dbReference type="OMA" id="RRHIQWA"/>
<dbReference type="OrthoDB" id="307488at2759"/>
<dbReference type="Proteomes" id="UP000001055">
    <property type="component" value="Unassembled WGS sequence"/>
</dbReference>
<dbReference type="GO" id="GO:0005634">
    <property type="term" value="C:nucleus"/>
    <property type="evidence" value="ECO:0000318"/>
    <property type="project" value="GO_Central"/>
</dbReference>
<dbReference type="GO" id="GO:0008157">
    <property type="term" value="F:protein phosphatase 1 binding"/>
    <property type="evidence" value="ECO:0000318"/>
    <property type="project" value="GO_Central"/>
</dbReference>
<dbReference type="GO" id="GO:0004865">
    <property type="term" value="F:protein serine/threonine phosphatase inhibitor activity"/>
    <property type="evidence" value="ECO:0000318"/>
    <property type="project" value="GO_Central"/>
</dbReference>
<dbReference type="InterPro" id="IPR011107">
    <property type="entry name" value="PPI_Ypi1"/>
</dbReference>
<dbReference type="PANTHER" id="PTHR20835:SF0">
    <property type="entry name" value="E3 UBIQUITIN-PROTEIN LIGASE PPP1R11"/>
    <property type="match status" value="1"/>
</dbReference>
<dbReference type="PANTHER" id="PTHR20835">
    <property type="entry name" value="E3 UBIQUITIN-PROTEIN LIGASE PPP1R11-RELATED"/>
    <property type="match status" value="1"/>
</dbReference>
<dbReference type="Pfam" id="PF07491">
    <property type="entry name" value="PPI_Ypi1"/>
    <property type="match status" value="1"/>
</dbReference>